<sequence>MEAYKQWVWRNREYVQSFGSFANGLTWLLPEKFSASEIGPEAVTAFLGIFSTINEHIIENAPTPRGHVGSSGNDPSLSYPLLIAILKDLETVVEVAAEHFYGDKKWNYIILTEAMKAVIRLALFRNSGYKMLLQGGETPNEEKDSNQSESQNRAGNSGRNLGPHGLGNQNHHNPWNLEGRAMSALSSFGQNARTTTSSTPGWSRRIQHQQAVIEPPMIKERRRTMSELLTEKGVNGALFAIGEVLYITRPLIYVLFIRKYGVRSWIPWAISLSVDTLGMGLLANSKWWGEKSKQVHFSGPEKDELRRRKLIWALYLMRDPFFTKYTRQKLESSQKKLELIPLIGFLTEKIVELLEGAQSRYTYISGS</sequence>
<dbReference type="EMBL" id="AF085354">
    <property type="protein sequence ID" value="AAD30661.1"/>
    <property type="molecule type" value="mRNA"/>
</dbReference>
<dbReference type="EMBL" id="AC003680">
    <property type="protein sequence ID" value="AAM14899.1"/>
    <property type="molecule type" value="Genomic_DNA"/>
</dbReference>
<dbReference type="EMBL" id="CP002685">
    <property type="protein sequence ID" value="AEC10587.1"/>
    <property type="molecule type" value="Genomic_DNA"/>
</dbReference>
<dbReference type="EMBL" id="AK175396">
    <property type="protein sequence ID" value="BAD43159.1"/>
    <property type="molecule type" value="mRNA"/>
</dbReference>
<dbReference type="EMBL" id="AK175414">
    <property type="protein sequence ID" value="BAD43177.1"/>
    <property type="molecule type" value="mRNA"/>
</dbReference>
<dbReference type="RefSeq" id="NP_566053.1">
    <property type="nucleotide sequence ID" value="NM_130132.4"/>
</dbReference>
<dbReference type="BioGRID" id="4513">
    <property type="interactions" value="1"/>
</dbReference>
<dbReference type="FunCoup" id="Q8S8S1">
    <property type="interactions" value="4027"/>
</dbReference>
<dbReference type="STRING" id="3702.Q8S8S1"/>
<dbReference type="TCDB" id="9.A.17.1.3">
    <property type="family name" value="the integral membrane peroxisomal protein importer-2 (ppi2) family"/>
</dbReference>
<dbReference type="GlyGen" id="Q8S8S1">
    <property type="glycosylation" value="1 site"/>
</dbReference>
<dbReference type="iPTMnet" id="Q8S8S1"/>
<dbReference type="PaxDb" id="3702-AT2G45690.1"/>
<dbReference type="ProteomicsDB" id="236428"/>
<dbReference type="EnsemblPlants" id="AT2G45690.1">
    <property type="protein sequence ID" value="AT2G45690.1"/>
    <property type="gene ID" value="AT2G45690"/>
</dbReference>
<dbReference type="GeneID" id="819177"/>
<dbReference type="Gramene" id="AT2G45690.1">
    <property type="protein sequence ID" value="AT2G45690.1"/>
    <property type="gene ID" value="AT2G45690"/>
</dbReference>
<dbReference type="KEGG" id="ath:AT2G45690"/>
<dbReference type="Araport" id="AT2G45690"/>
<dbReference type="TAIR" id="AT2G45690">
    <property type="gene designation" value="SSE1"/>
</dbReference>
<dbReference type="eggNOG" id="KOG4546">
    <property type="taxonomic scope" value="Eukaryota"/>
</dbReference>
<dbReference type="HOGENOM" id="CLU_036533_0_0_1"/>
<dbReference type="InParanoid" id="Q8S8S1"/>
<dbReference type="OMA" id="PTWQSTY"/>
<dbReference type="PhylomeDB" id="Q8S8S1"/>
<dbReference type="PRO" id="PR:Q8S8S1"/>
<dbReference type="Proteomes" id="UP000006548">
    <property type="component" value="Chromosome 2"/>
</dbReference>
<dbReference type="ExpressionAtlas" id="Q8S8S1">
    <property type="expression patterns" value="baseline and differential"/>
</dbReference>
<dbReference type="GO" id="GO:0005789">
    <property type="term" value="C:endoplasmic reticulum membrane"/>
    <property type="evidence" value="ECO:0000314"/>
    <property type="project" value="TAIR"/>
</dbReference>
<dbReference type="GO" id="GO:0005778">
    <property type="term" value="C:peroxisomal membrane"/>
    <property type="evidence" value="ECO:0007669"/>
    <property type="project" value="UniProtKB-SubCell"/>
</dbReference>
<dbReference type="GO" id="GO:0005777">
    <property type="term" value="C:peroxisome"/>
    <property type="evidence" value="ECO:0000314"/>
    <property type="project" value="TAIR"/>
</dbReference>
<dbReference type="GO" id="GO:0006633">
    <property type="term" value="P:fatty acid biosynthetic process"/>
    <property type="evidence" value="ECO:0000315"/>
    <property type="project" value="TAIR"/>
</dbReference>
<dbReference type="GO" id="GO:0007031">
    <property type="term" value="P:peroxisome organization"/>
    <property type="evidence" value="ECO:0000315"/>
    <property type="project" value="TAIR"/>
</dbReference>
<dbReference type="InterPro" id="IPR013919">
    <property type="entry name" value="Pex16"/>
</dbReference>
<dbReference type="PANTHER" id="PTHR13299">
    <property type="entry name" value="PEROXISOMAL MEMBRANE PROTEIN PEX16"/>
    <property type="match status" value="1"/>
</dbReference>
<dbReference type="PANTHER" id="PTHR13299:SF0">
    <property type="entry name" value="PEROXISOMAL MEMBRANE PROTEIN PEX16"/>
    <property type="match status" value="1"/>
</dbReference>
<dbReference type="Pfam" id="PF08610">
    <property type="entry name" value="Pex16"/>
    <property type="match status" value="1"/>
</dbReference>
<organism>
    <name type="scientific">Arabidopsis thaliana</name>
    <name type="common">Mouse-ear cress</name>
    <dbReference type="NCBI Taxonomy" id="3702"/>
    <lineage>
        <taxon>Eukaryota</taxon>
        <taxon>Viridiplantae</taxon>
        <taxon>Streptophyta</taxon>
        <taxon>Embryophyta</taxon>
        <taxon>Tracheophyta</taxon>
        <taxon>Spermatophyta</taxon>
        <taxon>Magnoliopsida</taxon>
        <taxon>eudicotyledons</taxon>
        <taxon>Gunneridae</taxon>
        <taxon>Pentapetalae</taxon>
        <taxon>rosids</taxon>
        <taxon>malvids</taxon>
        <taxon>Brassicales</taxon>
        <taxon>Brassicaceae</taxon>
        <taxon>Camelineae</taxon>
        <taxon>Arabidopsis</taxon>
    </lineage>
</organism>
<comment type="function">
    <text evidence="3 4 6 7 8">Involved in the formation of peroxisomes, lipid bodies and protein bodies.</text>
</comment>
<comment type="subunit">
    <text evidence="9">Interacts with APEM9 (via both N- and C-terminus).</text>
</comment>
<comment type="subcellular location">
    <subcellularLocation>
        <location evidence="13">Peroxisome membrane</location>
        <topology evidence="13">Multi-pass membrane protein</topology>
    </subcellularLocation>
    <subcellularLocation>
        <location evidence="13">Endoplasmic reticulum membrane</location>
        <topology evidence="13">Multi-pass membrane protein</topology>
    </subcellularLocation>
    <text evidence="4 5 7">Moves through an intermediate compartment from endoplasmic reticulum to pre-existing peroxisomes.</text>
</comment>
<comment type="tissue specificity">
    <text evidence="3 4 5">Expressed in roots, siliques, seeds, cotyledons, leaves and flowers. Low expression in leaves and roots.</text>
</comment>
<comment type="developmental stage">
    <text evidence="3">Up-regulated during seed maturation.</text>
</comment>
<comment type="domain">
    <text>The internal domain (235-279) containing two internal membrane helices and the intervening residues that include the basic cluster VRS is sufficient for targeting recombinant proteins to endoplasmic reticulum and then to peroxisomes.</text>
</comment>
<comment type="PTM">
    <text>The detection of an additional immunorelated polypeptide of 52 kDa suggests a post-translational modification of PEX16.</text>
</comment>
<comment type="disruption phenotype">
    <text evidence="3">Not viable shrunken seeds. Starch accumulation in mature embryos, cotyledon and hypocotyl cells. Developmental delay during early embryo morphogenesis.</text>
</comment>
<comment type="miscellaneous">
    <text>Travels from the cytosol to peroxisomes via the reticular and perinuclear endoplasmic reticulum (ER) and an ER-peroxisome intermediate compartment (ERPIC).</text>
</comment>
<comment type="similarity">
    <text evidence="13">Belongs to the peroxin-16 family.</text>
</comment>
<protein>
    <recommendedName>
        <fullName evidence="12">Peroxisome biogenesis protein 16</fullName>
    </recommendedName>
    <alternativeName>
        <fullName evidence="12">Peroxin-16</fullName>
        <shortName evidence="12">AtPEX16</shortName>
        <shortName evidence="11">AtPex16p</shortName>
    </alternativeName>
    <alternativeName>
        <fullName evidence="10">Protein SHRUNKEN SEED 1</fullName>
    </alternativeName>
</protein>
<evidence type="ECO:0000255" key="1"/>
<evidence type="ECO:0000256" key="2">
    <source>
        <dbReference type="SAM" id="MobiDB-lite"/>
    </source>
</evidence>
<evidence type="ECO:0000269" key="3">
    <source>
    </source>
</evidence>
<evidence type="ECO:0000269" key="4">
    <source>
    </source>
</evidence>
<evidence type="ECO:0000269" key="5">
    <source>
    </source>
</evidence>
<evidence type="ECO:0000269" key="6">
    <source>
    </source>
</evidence>
<evidence type="ECO:0000269" key="7">
    <source>
    </source>
</evidence>
<evidence type="ECO:0000269" key="8">
    <source>
    </source>
</evidence>
<evidence type="ECO:0000269" key="9">
    <source>
    </source>
</evidence>
<evidence type="ECO:0000303" key="10">
    <source>
    </source>
</evidence>
<evidence type="ECO:0000303" key="11">
    <source>
    </source>
</evidence>
<evidence type="ECO:0000303" key="12">
    <source>
    </source>
</evidence>
<evidence type="ECO:0000305" key="13"/>
<evidence type="ECO:0000312" key="14">
    <source>
        <dbReference type="Araport" id="AT2G45690"/>
    </source>
</evidence>
<evidence type="ECO:0000312" key="15">
    <source>
        <dbReference type="EMBL" id="AAM14899.1"/>
    </source>
</evidence>
<keyword id="KW-0256">Endoplasmic reticulum</keyword>
<keyword id="KW-0472">Membrane</keyword>
<keyword id="KW-0576">Peroxisome</keyword>
<keyword id="KW-0962">Peroxisome biogenesis</keyword>
<keyword id="KW-1185">Reference proteome</keyword>
<keyword id="KW-0812">Transmembrane</keyword>
<keyword id="KW-1133">Transmembrane helix</keyword>
<accession>Q8S8S1</accession>
<accession>Q682F3</accession>
<accession>Q9XEG0</accession>
<proteinExistence type="evidence at protein level"/>
<reference key="1">
    <citation type="journal article" date="1999" name="Science">
        <title>The Pex16p homolog SSE1 and storage organelle formation in Arabidopsis seeds.</title>
        <authorList>
            <person name="Lin Y."/>
            <person name="Sun L."/>
            <person name="Nguyen L.V."/>
            <person name="Rachubinski R.A."/>
            <person name="Goodman H.M."/>
        </authorList>
    </citation>
    <scope>NUCLEOTIDE SEQUENCE [MRNA]</scope>
    <scope>FUNCTION</scope>
    <scope>TISSUE SPECIFICITY</scope>
    <scope>DEVELOPMENTAL STAGE</scope>
    <scope>DISRUPTION PHENOTYPE</scope>
</reference>
<reference key="2">
    <citation type="journal article" date="1999" name="Nature">
        <title>Sequence and analysis of chromosome 2 of the plant Arabidopsis thaliana.</title>
        <authorList>
            <person name="Lin X."/>
            <person name="Kaul S."/>
            <person name="Rounsley S.D."/>
            <person name="Shea T.P."/>
            <person name="Benito M.-I."/>
            <person name="Town C.D."/>
            <person name="Fujii C.Y."/>
            <person name="Mason T.M."/>
            <person name="Bowman C.L."/>
            <person name="Barnstead M.E."/>
            <person name="Feldblyum T.V."/>
            <person name="Buell C.R."/>
            <person name="Ketchum K.A."/>
            <person name="Lee J.J."/>
            <person name="Ronning C.M."/>
            <person name="Koo H.L."/>
            <person name="Moffat K.S."/>
            <person name="Cronin L.A."/>
            <person name="Shen M."/>
            <person name="Pai G."/>
            <person name="Van Aken S."/>
            <person name="Umayam L."/>
            <person name="Tallon L.J."/>
            <person name="Gill J.E."/>
            <person name="Adams M.D."/>
            <person name="Carrera A.J."/>
            <person name="Creasy T.H."/>
            <person name="Goodman H.M."/>
            <person name="Somerville C.R."/>
            <person name="Copenhaver G.P."/>
            <person name="Preuss D."/>
            <person name="Nierman W.C."/>
            <person name="White O."/>
            <person name="Eisen J.A."/>
            <person name="Salzberg S.L."/>
            <person name="Fraser C.M."/>
            <person name="Venter J.C."/>
        </authorList>
    </citation>
    <scope>NUCLEOTIDE SEQUENCE [LARGE SCALE GENOMIC DNA]</scope>
    <source>
        <strain>cv. Columbia</strain>
    </source>
</reference>
<reference key="3">
    <citation type="journal article" date="2017" name="Plant J.">
        <title>Araport11: a complete reannotation of the Arabidopsis thaliana reference genome.</title>
        <authorList>
            <person name="Cheng C.Y."/>
            <person name="Krishnakumar V."/>
            <person name="Chan A.P."/>
            <person name="Thibaud-Nissen F."/>
            <person name="Schobel S."/>
            <person name="Town C.D."/>
        </authorList>
    </citation>
    <scope>GENOME REANNOTATION</scope>
    <source>
        <strain>cv. Columbia</strain>
    </source>
</reference>
<reference key="4">
    <citation type="submission" date="2004-09" db="EMBL/GenBank/DDBJ databases">
        <title>Large-scale analysis of RIKEN Arabidopsis full-length (RAFL) cDNAs.</title>
        <authorList>
            <person name="Totoki Y."/>
            <person name="Seki M."/>
            <person name="Ishida J."/>
            <person name="Nakajima M."/>
            <person name="Enju A."/>
            <person name="Kamiya A."/>
            <person name="Narusaka M."/>
            <person name="Shin-i T."/>
            <person name="Nakagawa M."/>
            <person name="Sakamoto N."/>
            <person name="Oishi K."/>
            <person name="Kohara Y."/>
            <person name="Kobayashi M."/>
            <person name="Toyoda A."/>
            <person name="Sakaki Y."/>
            <person name="Sakurai T."/>
            <person name="Iida K."/>
            <person name="Akiyama K."/>
            <person name="Satou M."/>
            <person name="Toyoda T."/>
            <person name="Konagaya A."/>
            <person name="Carninci P."/>
            <person name="Kawai J."/>
            <person name="Hayashizaki Y."/>
            <person name="Shinozaki K."/>
        </authorList>
    </citation>
    <scope>NUCLEOTIDE SEQUENCE [LARGE SCALE MRNA]</scope>
</reference>
<reference key="5">
    <citation type="journal article" date="2004" name="Plant Physiol.">
        <title>The peroxisome deficient Arabidopsis mutant sse1 exhibits impaired fatty acid synthesis.</title>
        <authorList>
            <person name="Lin Y."/>
            <person name="Cluette-Brown J.E."/>
            <person name="Goodman H.M."/>
        </authorList>
    </citation>
    <scope>FUNCTION</scope>
    <scope>SUBCELLULAR LOCATION</scope>
    <scope>TISSUE SPECIFICITY</scope>
</reference>
<reference key="6">
    <citation type="journal article" date="2005" name="Plant Physiol.">
        <title>Arabidopsis peroxin 16 coexists at steady state in peroxisomes and endoplasmic reticulum.</title>
        <authorList>
            <person name="Karnik S.K."/>
            <person name="Trelease R.N."/>
        </authorList>
    </citation>
    <scope>SUBCELLULAR LOCATION</scope>
    <scope>TISSUE SPECIFICITY</scope>
    <scope>POST-TRANSLATIONAL MODIFICATION</scope>
</reference>
<reference key="7">
    <citation type="journal article" date="2006" name="Planta">
        <title>Genetic and transgenic perturbations of carbon reserve production in Arabidopsis seeds reveal metabolic interactions of biochemical pathways.</title>
        <authorList>
            <person name="Lin Y."/>
            <person name="Ulanov A.V."/>
            <person name="Lozovaya V."/>
            <person name="Widholm J."/>
            <person name="Zhang G."/>
            <person name="Guo J."/>
            <person name="Goodman H.M."/>
        </authorList>
    </citation>
    <scope>FUNCTION</scope>
</reference>
<reference key="8">
    <citation type="journal article" date="2007" name="J. Exp. Bot.">
        <title>Arabidopsis peroxin 16 trafficks through the ER and an intermediate compartment to pre-existing peroxisomes via overlapping molecular targeting signals.</title>
        <authorList>
            <person name="Karnik S.K."/>
            <person name="Trelease R.N."/>
        </authorList>
    </citation>
    <scope>FUNCTION</scope>
    <scope>MUTAGENESIS OF 221-ARG--ARG-223; 258-ARG--TYR-260; 258-ARG--SER-264 AND 306-ARG--ARG-308</scope>
    <scope>SUBCELLULAR LOCATION</scope>
    <source>
        <strain>cv. Landsberg erecta</strain>
    </source>
</reference>
<reference key="9">
    <citation type="journal article" date="2007" name="Plant Cell Physiol.">
        <title>Functional classification of Arabidopsis peroxisome biogenesis factors proposed from analyses of knockdown mutants.</title>
        <authorList>
            <person name="Nito K."/>
            <person name="Kamigaki A."/>
            <person name="Kondo M."/>
            <person name="Hayashi M."/>
            <person name="Nishimura M."/>
        </authorList>
    </citation>
    <scope>FUNCTION</scope>
</reference>
<reference key="10">
    <citation type="journal article" date="2014" name="Plant Cell">
        <title>Arabidopsis DAYU/ABERRANT PEROXISOME MORPHOLOGY9 is a key regulator of peroxisome biogenesis and plays critical roles during pollen maturation and germination in planta.</title>
        <authorList>
            <person name="Li X.R."/>
            <person name="Li H.J."/>
            <person name="Yuan L."/>
            <person name="Liu M."/>
            <person name="Shi D.Q."/>
            <person name="Liu J."/>
            <person name="Yang W.C."/>
        </authorList>
    </citation>
    <scope>INTERACTION WITH APEM9</scope>
</reference>
<gene>
    <name evidence="12" type="primary">PEX16</name>
    <name evidence="10" type="synonym">SSE1</name>
    <name evidence="14" type="ordered locus">At2g45690</name>
    <name evidence="15" type="ORF">F17K2.22</name>
</gene>
<feature type="chain" id="PRO_0000403363" description="Peroxisome biogenesis protein 16">
    <location>
        <begin position="1"/>
        <end position="367"/>
    </location>
</feature>
<feature type="transmembrane region" description="Helical" evidence="1">
    <location>
        <begin position="237"/>
        <end position="257"/>
    </location>
</feature>
<feature type="transmembrane region" description="Helical" evidence="1">
    <location>
        <begin position="264"/>
        <end position="284"/>
    </location>
</feature>
<feature type="region of interest" description="Disordered" evidence="2">
    <location>
        <begin position="135"/>
        <end position="173"/>
    </location>
</feature>
<feature type="compositionally biased region" description="Polar residues" evidence="2">
    <location>
        <begin position="147"/>
        <end position="159"/>
    </location>
</feature>
<feature type="mutagenesis site" description="No effect on targeting." evidence="7">
    <original>RRR</original>
    <variation>GGG</variation>
    <location>
        <begin position="221"/>
        <end position="223"/>
    </location>
</feature>
<feature type="mutagenesis site" description="Loss of targeting to peroxisome." evidence="7">
    <original>RKYGVRS</original>
    <variation>GGGGGGG</variation>
    <location>
        <begin position="258"/>
        <end position="264"/>
    </location>
</feature>
<feature type="mutagenesis site" description="No effect on targeting." evidence="7">
    <original>RKY</original>
    <variation>GGG</variation>
    <location>
        <begin position="258"/>
        <end position="260"/>
    </location>
</feature>
<feature type="mutagenesis site" description="No effect on targeting." evidence="7">
    <original>RRR</original>
    <variation>GGG</variation>
    <location>
        <begin position="306"/>
        <end position="308"/>
    </location>
</feature>
<feature type="sequence conflict" description="In Ref. 1; AAD30661." evidence="13" ref="1">
    <original>S</original>
    <variation>T</variation>
    <location>
        <position position="51"/>
    </location>
</feature>
<feature type="sequence conflict" description="In Ref. 4; BAD43177." evidence="13" ref="4">
    <original>P</original>
    <variation>T</variation>
    <location>
        <position position="200"/>
    </location>
</feature>
<name>PEX16_ARATH</name>